<gene>
    <name type="ordered locus">CA_C2825</name>
</gene>
<evidence type="ECO:0000305" key="1"/>
<comment type="similarity">
    <text evidence="1">Belongs to the UPF0178 family.</text>
</comment>
<protein>
    <recommendedName>
        <fullName>UPF0178 protein CA_C2825</fullName>
    </recommendedName>
</protein>
<feature type="chain" id="PRO_0000175973" description="UPF0178 protein CA_C2825">
    <location>
        <begin position="1"/>
        <end position="148"/>
    </location>
</feature>
<organism>
    <name type="scientific">Clostridium acetobutylicum (strain ATCC 824 / DSM 792 / JCM 1419 / IAM 19013 / LMG 5710 / NBRC 13948 / NRRL B-527 / VKM B-1787 / 2291 / W)</name>
    <dbReference type="NCBI Taxonomy" id="272562"/>
    <lineage>
        <taxon>Bacteria</taxon>
        <taxon>Bacillati</taxon>
        <taxon>Bacillota</taxon>
        <taxon>Clostridia</taxon>
        <taxon>Eubacteriales</taxon>
        <taxon>Clostridiaceae</taxon>
        <taxon>Clostridium</taxon>
    </lineage>
</organism>
<name>Y2825_CLOAB</name>
<proteinExistence type="inferred from homology"/>
<accession>Q97FB5</accession>
<sequence length="148" mass="16521">MKIYVDADACPVVSIVERVAQEMKIPVTLLCDTNHILNSTYSDIKIIGAGADAVDFALINLCHRGDVVVTQDYGVAAMALGKGAYAIHQSGKLYENDNIDRMLMERHIAKKARRASSKNHMKGPRKRTSEDDERFEAAFRRLIMRGKV</sequence>
<reference key="1">
    <citation type="journal article" date="2001" name="J. Bacteriol.">
        <title>Genome sequence and comparative analysis of the solvent-producing bacterium Clostridium acetobutylicum.</title>
        <authorList>
            <person name="Noelling J."/>
            <person name="Breton G."/>
            <person name="Omelchenko M.V."/>
            <person name="Makarova K.S."/>
            <person name="Zeng Q."/>
            <person name="Gibson R."/>
            <person name="Lee H.M."/>
            <person name="Dubois J."/>
            <person name="Qiu D."/>
            <person name="Hitti J."/>
            <person name="Wolf Y.I."/>
            <person name="Tatusov R.L."/>
            <person name="Sabathe F."/>
            <person name="Doucette-Stamm L.A."/>
            <person name="Soucaille P."/>
            <person name="Daly M.J."/>
            <person name="Bennett G.N."/>
            <person name="Koonin E.V."/>
            <person name="Smith D.R."/>
        </authorList>
    </citation>
    <scope>NUCLEOTIDE SEQUENCE [LARGE SCALE GENOMIC DNA]</scope>
    <source>
        <strain>ATCC 824 / DSM 792 / JCM 1419 / IAM 19013 / LMG 5710 / NBRC 13948 / NRRL B-527 / VKM B-1787 / 2291 / W</strain>
    </source>
</reference>
<dbReference type="EMBL" id="AE001437">
    <property type="protein sequence ID" value="AAK80769.1"/>
    <property type="molecule type" value="Genomic_DNA"/>
</dbReference>
<dbReference type="PIR" id="F97247">
    <property type="entry name" value="F97247"/>
</dbReference>
<dbReference type="RefSeq" id="NP_349429.1">
    <property type="nucleotide sequence ID" value="NC_003030.1"/>
</dbReference>
<dbReference type="RefSeq" id="WP_010966110.1">
    <property type="nucleotide sequence ID" value="NC_003030.1"/>
</dbReference>
<dbReference type="STRING" id="272562.CA_C2825"/>
<dbReference type="KEGG" id="cac:CA_C2825"/>
<dbReference type="PATRIC" id="fig|272562.8.peg.3010"/>
<dbReference type="eggNOG" id="COG1671">
    <property type="taxonomic scope" value="Bacteria"/>
</dbReference>
<dbReference type="HOGENOM" id="CLU_106619_0_0_9"/>
<dbReference type="OrthoDB" id="9798918at2"/>
<dbReference type="Proteomes" id="UP000000814">
    <property type="component" value="Chromosome"/>
</dbReference>
<dbReference type="HAMAP" id="MF_00489">
    <property type="entry name" value="UPF0178"/>
    <property type="match status" value="1"/>
</dbReference>
<dbReference type="InterPro" id="IPR003791">
    <property type="entry name" value="UPF0178"/>
</dbReference>
<dbReference type="NCBIfam" id="NF001095">
    <property type="entry name" value="PRK00124.1"/>
    <property type="match status" value="1"/>
</dbReference>
<dbReference type="PANTHER" id="PTHR35146">
    <property type="entry name" value="UPF0178 PROTEIN YAII"/>
    <property type="match status" value="1"/>
</dbReference>
<dbReference type="PANTHER" id="PTHR35146:SF1">
    <property type="entry name" value="UPF0178 PROTEIN YAII"/>
    <property type="match status" value="1"/>
</dbReference>
<dbReference type="Pfam" id="PF02639">
    <property type="entry name" value="DUF188"/>
    <property type="match status" value="1"/>
</dbReference>
<keyword id="KW-1185">Reference proteome</keyword>